<protein>
    <recommendedName>
        <fullName>Small hydrophobic protein</fullName>
    </recommendedName>
</protein>
<organismHost>
    <name type="scientific">Homo sapiens</name>
    <name type="common">Human</name>
    <dbReference type="NCBI Taxonomy" id="9606"/>
</organismHost>
<organism>
    <name type="scientific">Mumps virus (strain RW)</name>
    <name type="common">MuV</name>
    <dbReference type="NCBI Taxonomy" id="11172"/>
    <lineage>
        <taxon>Viruses</taxon>
        <taxon>Riboviria</taxon>
        <taxon>Orthornavirae</taxon>
        <taxon>Negarnaviricota</taxon>
        <taxon>Haploviricotina</taxon>
        <taxon>Monjiviricetes</taxon>
        <taxon>Mononegavirales</taxon>
        <taxon>Paramyxoviridae</taxon>
        <taxon>Rubulavirinae</taxon>
        <taxon>Orthorubulavirus</taxon>
        <taxon>Orthorubulavirus parotitidis</taxon>
        <taxon>Mumps orthorubulavirus</taxon>
    </lineage>
</organism>
<reference key="1">
    <citation type="journal article" date="1993" name="Arch. Virol.">
        <title>Identification of a new mumps virus lineage by nucleotide sequence analysis of the SH gene of ten different strains.</title>
        <authorList>
            <person name="Yeo R.P."/>
            <person name="Afzal M.A."/>
            <person name="Forsey T."/>
            <person name="Rima B.K."/>
        </authorList>
    </citation>
    <scope>NUCLEOTIDE SEQUENCE [GENOMIC RNA]</scope>
</reference>
<comment type="function">
    <text evidence="2">Plays a role in the inhibition of the host NF-kappa-B pathway. This inhibition occurs at the receptor level, by preventing the signaling of TNFR1 as well as IL-1R and TLR3.</text>
</comment>
<comment type="subunit">
    <text evidence="1 2">Interacts with host TNFRSF1A, RIPK1 and IRAK1; these interactions interfere with host NF-kappa-B activation at the level of receptor complexes (By similarity). Interacts with host protein UBQLN4 (By similarity).</text>
</comment>
<comment type="subcellular location">
    <subcellularLocation>
        <location evidence="2">Virion membrane</location>
        <topology evidence="2">Single-pass membrane protein</topology>
    </subcellularLocation>
    <subcellularLocation>
        <location evidence="2">Host cell membrane</location>
        <topology evidence="2">Single-pass membrane protein</topology>
    </subcellularLocation>
</comment>
<comment type="similarity">
    <text evidence="4">Belongs to the rubulavirus small hydrophobic protein family.</text>
</comment>
<name>SH_MUMPR</name>
<gene>
    <name type="primary">SH</name>
</gene>
<sequence>MPAIQPPLYLTFLLLILLYRIITLYVWIILTITYKTSVRHAALHQRSFFRWSFDHSL</sequence>
<evidence type="ECO:0000250" key="1">
    <source>
        <dbReference type="UniProtKB" id="P22110"/>
    </source>
</evidence>
<evidence type="ECO:0000250" key="2">
    <source>
        <dbReference type="UniProtKB" id="P22112"/>
    </source>
</evidence>
<evidence type="ECO:0000255" key="3"/>
<evidence type="ECO:0000305" key="4"/>
<keyword id="KW-1032">Host cell membrane</keyword>
<keyword id="KW-1043">Host membrane</keyword>
<keyword id="KW-0945">Host-virus interaction</keyword>
<keyword id="KW-1100">Inhibition of host NF-kappa-B by virus</keyword>
<keyword id="KW-0472">Membrane</keyword>
<keyword id="KW-0812">Transmembrane</keyword>
<keyword id="KW-1133">Transmembrane helix</keyword>
<keyword id="KW-0946">Virion</keyword>
<feature type="chain" id="PRO_0000142882" description="Small hydrophobic protein">
    <location>
        <begin position="1"/>
        <end position="57"/>
    </location>
</feature>
<feature type="topological domain" description="Virion surface" evidence="3">
    <location>
        <begin position="1"/>
        <end position="8"/>
    </location>
</feature>
<feature type="transmembrane region" description="Helical" evidence="3">
    <location>
        <begin position="9"/>
        <end position="29"/>
    </location>
</feature>
<feature type="topological domain" description="Intravirion" evidence="3">
    <location>
        <begin position="30"/>
        <end position="57"/>
    </location>
</feature>
<proteinExistence type="inferred from homology"/>
<dbReference type="EMBL" id="X63708">
    <property type="protein sequence ID" value="CAA45241.1"/>
    <property type="molecule type" value="Genomic_RNA"/>
</dbReference>
<dbReference type="PIR" id="S24827">
    <property type="entry name" value="S24827"/>
</dbReference>
<dbReference type="SMR" id="P28087"/>
<dbReference type="GO" id="GO:0020002">
    <property type="term" value="C:host cell plasma membrane"/>
    <property type="evidence" value="ECO:0007669"/>
    <property type="project" value="UniProtKB-SubCell"/>
</dbReference>
<dbReference type="GO" id="GO:0016020">
    <property type="term" value="C:membrane"/>
    <property type="evidence" value="ECO:0007669"/>
    <property type="project" value="UniProtKB-KW"/>
</dbReference>
<dbReference type="GO" id="GO:0055036">
    <property type="term" value="C:virion membrane"/>
    <property type="evidence" value="ECO:0007669"/>
    <property type="project" value="UniProtKB-SubCell"/>
</dbReference>
<dbReference type="GO" id="GO:0085034">
    <property type="term" value="P:symbiont-mediated suppression of host NF-kappaB cascade"/>
    <property type="evidence" value="ECO:0007669"/>
    <property type="project" value="UniProtKB-KW"/>
</dbReference>
<dbReference type="InterPro" id="IPR001477">
    <property type="entry name" value="SH"/>
</dbReference>
<dbReference type="Pfam" id="PF01445">
    <property type="entry name" value="SH"/>
    <property type="match status" value="1"/>
</dbReference>
<dbReference type="PIRSF" id="PIRSF003923">
    <property type="entry name" value="SH"/>
    <property type="match status" value="1"/>
</dbReference>
<accession>P28087</accession>